<keyword id="KW-0025">Alternative splicing</keyword>
<keyword id="KW-0375">Hydrogen ion transport</keyword>
<keyword id="KW-0406">Ion transport</keyword>
<keyword id="KW-1185">Reference proteome</keyword>
<keyword id="KW-0813">Transport</keyword>
<evidence type="ECO:0000250" key="1">
    <source>
        <dbReference type="UniProtKB" id="P21282"/>
    </source>
</evidence>
<evidence type="ECO:0000250" key="2">
    <source>
        <dbReference type="UniProtKB" id="P21283"/>
    </source>
</evidence>
<evidence type="ECO:0000250" key="3">
    <source>
        <dbReference type="UniProtKB" id="P31412"/>
    </source>
</evidence>
<evidence type="ECO:0000256" key="4">
    <source>
        <dbReference type="SAM" id="MobiDB-lite"/>
    </source>
</evidence>
<evidence type="ECO:0000269" key="5">
    <source>
    </source>
</evidence>
<evidence type="ECO:0000269" key="6">
    <source>
    </source>
</evidence>
<evidence type="ECO:0000303" key="7">
    <source>
    </source>
</evidence>
<evidence type="ECO:0000303" key="8">
    <source>
    </source>
</evidence>
<evidence type="ECO:0000305" key="9"/>
<protein>
    <recommendedName>
        <fullName>V-type proton ATPase subunit C</fullName>
        <shortName>V-ATPase subunit C</shortName>
    </recommendedName>
    <alternativeName>
        <fullName>Vacuolar proton pump subunit C</fullName>
    </alternativeName>
</protein>
<name>VATC_DROME</name>
<sequence>MMSEYWIISAPGDKTCQQTYDTMNNLTSKQHNLCNNYKFHIPDLKVGTLDQLVGLSDDLGKLDTYVEQITRKVANYLGEVLEDQRDKLHENLMANNSPGPPDDSMPCRHHQRIKHLSLRHQRKHQHTHHQNKPQHYHHHHHHHQLPQDLKGKSAATCSPATPPAPASAPPHLPPACACDVLAPGSLTGGSLTNLSTSHEPEPEFDVCPCDECFACAPPSTSATASTLLADECYSQTASSMLSATRCALSTVAAIATGSGLGNGPSTSAAAAAAASNSSGGGGGGGPASCSTLCSSAYFSTSAPTTSSSVHSSMSRSNSKRLNNNTCSINNNKLSFRSGSHVSQLHLATQQPQHHHSHPHQQPHTNPLQSPVQKSMSEDEGDASNAHEDGETDEDPKSPHSVQSDLSDAFDWWFNKPKRNSKKSSAQQQHETAQLQHQQTTQQHATPLTPQNHNQYQNQHLSKAMTFWHQASTTPRSSYRSFFNSLADQIYSKRSTPSQLNINNGFNLTPTHRSSPVSSCCGSSSQGRSSPDTDPAEPPEFPLSPAELPQYLTRFQWDMAKYPIKQSLRNIADIISKQIGQIDGDLKTKSQAYNNLKGNLQNLEKKKTGSLLTRNLADLVKKEHFILDSEYLTTLLVIVPKVMANDWLTNYEKITDMIVPRSSQLIQEDADYCLFNVTLFKKVAEEFKLHARERKFIVRDFVYNEEELAAGKNEMTKLMTDKKKQFGPLVRWLKVNFSEAFCALIHVKALRVFVESVLRYGLPVNFQAILIEPNKKSVKRLRDVLNQLYGHLDGASAGGAVSSADNVDIPGLGFGQSEYFPYVFYKVNIDMVEQAKV</sequence>
<reference key="1">
    <citation type="journal article" date="1998" name="Genetics">
        <title>Genes expressed in the ring gland, the major endocrine organ of Drosophila melanogaster.</title>
        <authorList>
            <person name="Harvie P.D."/>
            <person name="Filippova M."/>
            <person name="Bryant P.J."/>
        </authorList>
    </citation>
    <scope>NUCLEOTIDE SEQUENCE [MRNA] (ISOFORM A)</scope>
    <scope>TISSUE SPECIFICITY</scope>
    <source>
        <tissue>CNS</tissue>
        <tissue>Larval ring gland</tissue>
    </source>
</reference>
<reference key="2">
    <citation type="journal article" date="2000" name="Science">
        <title>The genome sequence of Drosophila melanogaster.</title>
        <authorList>
            <person name="Adams M.D."/>
            <person name="Celniker S.E."/>
            <person name="Holt R.A."/>
            <person name="Evans C.A."/>
            <person name="Gocayne J.D."/>
            <person name="Amanatides P.G."/>
            <person name="Scherer S.E."/>
            <person name="Li P.W."/>
            <person name="Hoskins R.A."/>
            <person name="Galle R.F."/>
            <person name="George R.A."/>
            <person name="Lewis S.E."/>
            <person name="Richards S."/>
            <person name="Ashburner M."/>
            <person name="Henderson S.N."/>
            <person name="Sutton G.G."/>
            <person name="Wortman J.R."/>
            <person name="Yandell M.D."/>
            <person name="Zhang Q."/>
            <person name="Chen L.X."/>
            <person name="Brandon R.C."/>
            <person name="Rogers Y.-H.C."/>
            <person name="Blazej R.G."/>
            <person name="Champe M."/>
            <person name="Pfeiffer B.D."/>
            <person name="Wan K.H."/>
            <person name="Doyle C."/>
            <person name="Baxter E.G."/>
            <person name="Helt G."/>
            <person name="Nelson C.R."/>
            <person name="Miklos G.L.G."/>
            <person name="Abril J.F."/>
            <person name="Agbayani A."/>
            <person name="An H.-J."/>
            <person name="Andrews-Pfannkoch C."/>
            <person name="Baldwin D."/>
            <person name="Ballew R.M."/>
            <person name="Basu A."/>
            <person name="Baxendale J."/>
            <person name="Bayraktaroglu L."/>
            <person name="Beasley E.M."/>
            <person name="Beeson K.Y."/>
            <person name="Benos P.V."/>
            <person name="Berman B.P."/>
            <person name="Bhandari D."/>
            <person name="Bolshakov S."/>
            <person name="Borkova D."/>
            <person name="Botchan M.R."/>
            <person name="Bouck J."/>
            <person name="Brokstein P."/>
            <person name="Brottier P."/>
            <person name="Burtis K.C."/>
            <person name="Busam D.A."/>
            <person name="Butler H."/>
            <person name="Cadieu E."/>
            <person name="Center A."/>
            <person name="Chandra I."/>
            <person name="Cherry J.M."/>
            <person name="Cawley S."/>
            <person name="Dahlke C."/>
            <person name="Davenport L.B."/>
            <person name="Davies P."/>
            <person name="de Pablos B."/>
            <person name="Delcher A."/>
            <person name="Deng Z."/>
            <person name="Mays A.D."/>
            <person name="Dew I."/>
            <person name="Dietz S.M."/>
            <person name="Dodson K."/>
            <person name="Doup L.E."/>
            <person name="Downes M."/>
            <person name="Dugan-Rocha S."/>
            <person name="Dunkov B.C."/>
            <person name="Dunn P."/>
            <person name="Durbin K.J."/>
            <person name="Evangelista C.C."/>
            <person name="Ferraz C."/>
            <person name="Ferriera S."/>
            <person name="Fleischmann W."/>
            <person name="Fosler C."/>
            <person name="Gabrielian A.E."/>
            <person name="Garg N.S."/>
            <person name="Gelbart W.M."/>
            <person name="Glasser K."/>
            <person name="Glodek A."/>
            <person name="Gong F."/>
            <person name="Gorrell J.H."/>
            <person name="Gu Z."/>
            <person name="Guan P."/>
            <person name="Harris M."/>
            <person name="Harris N.L."/>
            <person name="Harvey D.A."/>
            <person name="Heiman T.J."/>
            <person name="Hernandez J.R."/>
            <person name="Houck J."/>
            <person name="Hostin D."/>
            <person name="Houston K.A."/>
            <person name="Howland T.J."/>
            <person name="Wei M.-H."/>
            <person name="Ibegwam C."/>
            <person name="Jalali M."/>
            <person name="Kalush F."/>
            <person name="Karpen G.H."/>
            <person name="Ke Z."/>
            <person name="Kennison J.A."/>
            <person name="Ketchum K.A."/>
            <person name="Kimmel B.E."/>
            <person name="Kodira C.D."/>
            <person name="Kraft C.L."/>
            <person name="Kravitz S."/>
            <person name="Kulp D."/>
            <person name="Lai Z."/>
            <person name="Lasko P."/>
            <person name="Lei Y."/>
            <person name="Levitsky A.A."/>
            <person name="Li J.H."/>
            <person name="Li Z."/>
            <person name="Liang Y."/>
            <person name="Lin X."/>
            <person name="Liu X."/>
            <person name="Mattei B."/>
            <person name="McIntosh T.C."/>
            <person name="McLeod M.P."/>
            <person name="McPherson D."/>
            <person name="Merkulov G."/>
            <person name="Milshina N.V."/>
            <person name="Mobarry C."/>
            <person name="Morris J."/>
            <person name="Moshrefi A."/>
            <person name="Mount S.M."/>
            <person name="Moy M."/>
            <person name="Murphy B."/>
            <person name="Murphy L."/>
            <person name="Muzny D.M."/>
            <person name="Nelson D.L."/>
            <person name="Nelson D.R."/>
            <person name="Nelson K.A."/>
            <person name="Nixon K."/>
            <person name="Nusskern D.R."/>
            <person name="Pacleb J.M."/>
            <person name="Palazzolo M."/>
            <person name="Pittman G.S."/>
            <person name="Pan S."/>
            <person name="Pollard J."/>
            <person name="Puri V."/>
            <person name="Reese M.G."/>
            <person name="Reinert K."/>
            <person name="Remington K."/>
            <person name="Saunders R.D.C."/>
            <person name="Scheeler F."/>
            <person name="Shen H."/>
            <person name="Shue B.C."/>
            <person name="Siden-Kiamos I."/>
            <person name="Simpson M."/>
            <person name="Skupski M.P."/>
            <person name="Smith T.J."/>
            <person name="Spier E."/>
            <person name="Spradling A.C."/>
            <person name="Stapleton M."/>
            <person name="Strong R."/>
            <person name="Sun E."/>
            <person name="Svirskas R."/>
            <person name="Tector C."/>
            <person name="Turner R."/>
            <person name="Venter E."/>
            <person name="Wang A.H."/>
            <person name="Wang X."/>
            <person name="Wang Z.-Y."/>
            <person name="Wassarman D.A."/>
            <person name="Weinstock G.M."/>
            <person name="Weissenbach J."/>
            <person name="Williams S.M."/>
            <person name="Woodage T."/>
            <person name="Worley K.C."/>
            <person name="Wu D."/>
            <person name="Yang S."/>
            <person name="Yao Q.A."/>
            <person name="Ye J."/>
            <person name="Yeh R.-F."/>
            <person name="Zaveri J.S."/>
            <person name="Zhan M."/>
            <person name="Zhang G."/>
            <person name="Zhao Q."/>
            <person name="Zheng L."/>
            <person name="Zheng X.H."/>
            <person name="Zhong F.N."/>
            <person name="Zhong W."/>
            <person name="Zhou X."/>
            <person name="Zhu S.C."/>
            <person name="Zhu X."/>
            <person name="Smith H.O."/>
            <person name="Gibbs R.A."/>
            <person name="Myers E.W."/>
            <person name="Rubin G.M."/>
            <person name="Venter J.C."/>
        </authorList>
    </citation>
    <scope>NUCLEOTIDE SEQUENCE [LARGE SCALE GENOMIC DNA]</scope>
    <source>
        <strain>Berkeley</strain>
    </source>
</reference>
<reference key="3">
    <citation type="journal article" date="2002" name="Genome Biol.">
        <title>Annotation of the Drosophila melanogaster euchromatic genome: a systematic review.</title>
        <authorList>
            <person name="Misra S."/>
            <person name="Crosby M.A."/>
            <person name="Mungall C.J."/>
            <person name="Matthews B.B."/>
            <person name="Campbell K.S."/>
            <person name="Hradecky P."/>
            <person name="Huang Y."/>
            <person name="Kaminker J.S."/>
            <person name="Millburn G.H."/>
            <person name="Prochnik S.E."/>
            <person name="Smith C.D."/>
            <person name="Tupy J.L."/>
            <person name="Whitfield E.J."/>
            <person name="Bayraktaroglu L."/>
            <person name="Berman B.P."/>
            <person name="Bettencourt B.R."/>
            <person name="Celniker S.E."/>
            <person name="de Grey A.D.N.J."/>
            <person name="Drysdale R.A."/>
            <person name="Harris N.L."/>
            <person name="Richter J."/>
            <person name="Russo S."/>
            <person name="Schroeder A.J."/>
            <person name="Shu S.Q."/>
            <person name="Stapleton M."/>
            <person name="Yamada C."/>
            <person name="Ashburner M."/>
            <person name="Gelbart W.M."/>
            <person name="Rubin G.M."/>
            <person name="Lewis S.E."/>
        </authorList>
    </citation>
    <scope>GENOME REANNOTATION</scope>
    <scope>ALTERNATIVE SPLICING</scope>
    <source>
        <strain>Berkeley</strain>
    </source>
</reference>
<reference key="4">
    <citation type="journal article" date="2002" name="Genome Biol.">
        <title>A Drosophila full-length cDNA resource.</title>
        <authorList>
            <person name="Stapleton M."/>
            <person name="Carlson J.W."/>
            <person name="Brokstein P."/>
            <person name="Yu C."/>
            <person name="Champe M."/>
            <person name="George R.A."/>
            <person name="Guarin H."/>
            <person name="Kronmiller B."/>
            <person name="Pacleb J.M."/>
            <person name="Park S."/>
            <person name="Wan K.H."/>
            <person name="Rubin G.M."/>
            <person name="Celniker S.E."/>
        </authorList>
    </citation>
    <scope>NUCLEOTIDE SEQUENCE [LARGE SCALE MRNA] (ISOFORM A)</scope>
    <source>
        <strain>Berkeley</strain>
        <tissue>Embryo</tissue>
        <tissue>Head</tissue>
    </source>
</reference>
<reference key="5">
    <citation type="submission" date="2004-10" db="EMBL/GenBank/DDBJ databases">
        <authorList>
            <person name="Stapleton M."/>
            <person name="Carlson J.W."/>
            <person name="Chavez C."/>
            <person name="Frise E."/>
            <person name="George R.A."/>
            <person name="Pacleb J.M."/>
            <person name="Park S."/>
            <person name="Wan K.H."/>
            <person name="Yu C."/>
            <person name="Rubin G.M."/>
            <person name="Celniker S.E."/>
        </authorList>
    </citation>
    <scope>NUCLEOTIDE SEQUENCE [LARGE SCALE MRNA] (ISOFORM E)</scope>
    <source>
        <strain>Berkeley</strain>
        <tissue>Embryo</tissue>
    </source>
</reference>
<reference key="6">
    <citation type="journal article" date="2020" name="Nature">
        <title>An intestinal zinc sensor regulates food intake and developmental growth.</title>
        <authorList>
            <person name="Redhai S."/>
            <person name="Pilgrim C."/>
            <person name="Gaspar P."/>
            <person name="Giesen L.V."/>
            <person name="Lopes T."/>
            <person name="Riabinina O."/>
            <person name="Grenier T."/>
            <person name="Milona A."/>
            <person name="Chanana B."/>
            <person name="Swadling J.B."/>
            <person name="Wang Y.F."/>
            <person name="Dahalan F."/>
            <person name="Yuan M."/>
            <person name="Wilsch-Brauninger M."/>
            <person name="Lin W.H."/>
            <person name="Dennison N."/>
            <person name="Capriotti P."/>
            <person name="Lawniczak M.K.N."/>
            <person name="Baines R.A."/>
            <person name="Warnecke T."/>
            <person name="Windbichler N."/>
            <person name="Leulier F."/>
            <person name="Bellono N.W."/>
            <person name="Miguel-Aliaga I."/>
        </authorList>
    </citation>
    <scope>FUNCTION</scope>
    <scope>DISRUPTION PHENOTYPE</scope>
</reference>
<feature type="chain" id="PRO_0000209353" description="V-type proton ATPase subunit C">
    <location>
        <begin position="1"/>
        <end position="836"/>
    </location>
</feature>
<feature type="region of interest" description="Disordered" evidence="4">
    <location>
        <begin position="116"/>
        <end position="169"/>
    </location>
</feature>
<feature type="region of interest" description="Disordered" evidence="4">
    <location>
        <begin position="302"/>
        <end position="403"/>
    </location>
</feature>
<feature type="region of interest" description="Disordered" evidence="4">
    <location>
        <begin position="415"/>
        <end position="453"/>
    </location>
</feature>
<feature type="region of interest" description="Disordered" evidence="4">
    <location>
        <begin position="496"/>
        <end position="544"/>
    </location>
</feature>
<feature type="compositionally biased region" description="Basic residues" evidence="4">
    <location>
        <begin position="116"/>
        <end position="144"/>
    </location>
</feature>
<feature type="compositionally biased region" description="Pro residues" evidence="4">
    <location>
        <begin position="160"/>
        <end position="169"/>
    </location>
</feature>
<feature type="compositionally biased region" description="Low complexity" evidence="4">
    <location>
        <begin position="302"/>
        <end position="316"/>
    </location>
</feature>
<feature type="compositionally biased region" description="Polar residues" evidence="4">
    <location>
        <begin position="319"/>
        <end position="348"/>
    </location>
</feature>
<feature type="compositionally biased region" description="Polar residues" evidence="4">
    <location>
        <begin position="364"/>
        <end position="374"/>
    </location>
</feature>
<feature type="compositionally biased region" description="Low complexity" evidence="4">
    <location>
        <begin position="425"/>
        <end position="450"/>
    </location>
</feature>
<feature type="compositionally biased region" description="Polar residues" evidence="4">
    <location>
        <begin position="496"/>
        <end position="511"/>
    </location>
</feature>
<feature type="compositionally biased region" description="Low complexity" evidence="4">
    <location>
        <begin position="512"/>
        <end position="529"/>
    </location>
</feature>
<feature type="splice variant" id="VSP_036912" description="In isoform A." evidence="7 8">
    <original>S</original>
    <variation>T</variation>
    <location>
        <position position="97"/>
    </location>
</feature>
<feature type="splice variant" id="VSP_000440" description="In isoform A." evidence="7 8">
    <location>
        <begin position="98"/>
        <end position="545"/>
    </location>
</feature>
<feature type="splice variant" id="VSP_000441" description="In isoform C." evidence="9">
    <location>
        <begin position="151"/>
        <end position="544"/>
    </location>
</feature>
<feature type="sequence conflict" description="In Ref. 5; AAV36859." evidence="9" ref="5">
    <original>A</original>
    <variation>E</variation>
    <location>
        <position position="296"/>
    </location>
</feature>
<feature type="sequence conflict" description="In Ref. 1; AAB62571." evidence="9" ref="1">
    <original>T</original>
    <variation>P</variation>
    <location>
        <position position="715"/>
    </location>
</feature>
<accession>Q9V7N5</accession>
<accession>O18365</accession>
<accession>Q0E956</accession>
<accession>Q5U1B8</accession>
<accession>Q869C0</accession>
<accession>Q95RY7</accession>
<accession>Q9V7N6</accession>
<accession>Q9V7N7</accession>
<proteinExistence type="evidence at transcript level"/>
<gene>
    <name type="primary">Vha44</name>
    <name type="synonym">l(2)06072</name>
    <name type="ORF">CG8048</name>
</gene>
<organism>
    <name type="scientific">Drosophila melanogaster</name>
    <name type="common">Fruit fly</name>
    <dbReference type="NCBI Taxonomy" id="7227"/>
    <lineage>
        <taxon>Eukaryota</taxon>
        <taxon>Metazoa</taxon>
        <taxon>Ecdysozoa</taxon>
        <taxon>Arthropoda</taxon>
        <taxon>Hexapoda</taxon>
        <taxon>Insecta</taxon>
        <taxon>Pterygota</taxon>
        <taxon>Neoptera</taxon>
        <taxon>Endopterygota</taxon>
        <taxon>Diptera</taxon>
        <taxon>Brachycera</taxon>
        <taxon>Muscomorpha</taxon>
        <taxon>Ephydroidea</taxon>
        <taxon>Drosophilidae</taxon>
        <taxon>Drosophila</taxon>
        <taxon>Sophophora</taxon>
    </lineage>
</organism>
<comment type="function">
    <text evidence="1 2 3 5">Subunit of the V1 complex of vacuolar(H+)-ATPase (V-ATPase), a multisubunit enzyme composed of a peripheral complex (V1) that hydrolyzes ATP and a membrane integral complex (V0) that translocates protons (By similarity). V-ATPase is responsible for acidifying and maintaining the pH of intracellular compartments and in some cell types, is targeted to the plasma membrane, where it is responsible for acidifying the extracellular environment (By similarity). Subunit C is necessary for the assembly of the catalytic sector of the enzyme and is likely to have a specific function in its catalytic activity (By similarity). In enterocytes, acts as part of a pHCl-2 sensory pathway which mediates Tor-dependent larval growth and metabolism in response to zinc availability (PubMed:32269334). Likely acts in maintaining enterocyte lysosomal acidification which consequently promotes Tor activation at the lysosome membrane (PubMed:32269334).</text>
</comment>
<comment type="subunit">
    <text evidence="2">V-ATPase is a heteromultimeric enzyme made up of two complexes: the ATP-hydrolytic V1 complex and the proton translocation V0 complex (By similarity). The V1 complex consists of three catalytic AB heterodimers that form a heterohexamer, three peripheral stalks each consisting of EG heterodimers, one central rotor including subunits D and F, and the regulatory subunits C and H (By similarity). The proton translocation complex V0 consists of the proton transport subunit a, a ring of proteolipid subunits c9c'', rotary subunit d, subunits e and f, and the accessory subunits VhaAC45 and ATP6AP2 (By similarity).</text>
</comment>
<comment type="alternative products">
    <event type="alternative splicing"/>
    <isoform>
        <id>Q9V7N5-1</id>
        <name>E</name>
        <sequence type="displayed"/>
    </isoform>
    <isoform>
        <id>Q9V7N5-2</id>
        <name>A</name>
        <sequence type="described" ref="VSP_036912 VSP_000440"/>
    </isoform>
    <isoform>
        <id>Q9V7N5-3</id>
        <name>C</name>
        <sequence type="described" ref="VSP_000441"/>
    </isoform>
</comment>
<comment type="tissue specificity">
    <text evidence="6">In larvae, expressed in the ring gland, CNS, imaginal disks and lymph gland.</text>
</comment>
<comment type="disruption phenotype">
    <text evidence="5">RNAi-mediated knockdown specifically in pHCl-2 expressing enterocytes delays pupariation and reduces food intake.</text>
</comment>
<comment type="similarity">
    <text evidence="9">Belongs to the V-ATPase C subunit family.</text>
</comment>
<dbReference type="EMBL" id="AF006655">
    <property type="protein sequence ID" value="AAB62571.1"/>
    <property type="molecule type" value="mRNA"/>
</dbReference>
<dbReference type="EMBL" id="AE013599">
    <property type="protein sequence ID" value="AAF58011.1"/>
    <property type="molecule type" value="Genomic_DNA"/>
</dbReference>
<dbReference type="EMBL" id="AE013599">
    <property type="protein sequence ID" value="AAF58012.1"/>
    <property type="molecule type" value="Genomic_DNA"/>
</dbReference>
<dbReference type="EMBL" id="AE013599">
    <property type="protein sequence ID" value="AAF58013.4"/>
    <property type="molecule type" value="Genomic_DNA"/>
</dbReference>
<dbReference type="EMBL" id="AY061038">
    <property type="protein sequence ID" value="AAL28586.1"/>
    <property type="molecule type" value="mRNA"/>
</dbReference>
<dbReference type="EMBL" id="AY102676">
    <property type="protein sequence ID" value="AAM27505.1"/>
    <property type="molecule type" value="mRNA"/>
</dbReference>
<dbReference type="EMBL" id="BT015974">
    <property type="protein sequence ID" value="AAV36859.1"/>
    <property type="molecule type" value="mRNA"/>
</dbReference>
<dbReference type="RefSeq" id="NP_001137679.1">
    <molecule id="Q9V7N5-1"/>
    <property type="nucleotide sequence ID" value="NM_001144207.2"/>
</dbReference>
<dbReference type="RefSeq" id="NP_477266.1">
    <molecule id="Q9V7N5-2"/>
    <property type="nucleotide sequence ID" value="NM_057918.5"/>
</dbReference>
<dbReference type="RefSeq" id="NP_599140.1">
    <molecule id="Q9V7N5-2"/>
    <property type="nucleotide sequence ID" value="NM_134313.4"/>
</dbReference>
<dbReference type="RefSeq" id="NP_725564.1">
    <molecule id="Q9V7N5-3"/>
    <property type="nucleotide sequence ID" value="NM_166163.3"/>
</dbReference>
<dbReference type="RefSeq" id="NP_725565.3">
    <molecule id="Q9V7N5-1"/>
    <property type="nucleotide sequence ID" value="NM_166164.5"/>
</dbReference>
<dbReference type="SMR" id="Q9V7N5"/>
<dbReference type="BioGRID" id="62544">
    <property type="interactions" value="15"/>
</dbReference>
<dbReference type="FunCoup" id="Q9V7N5">
    <property type="interactions" value="1911"/>
</dbReference>
<dbReference type="IntAct" id="Q9V7N5">
    <property type="interactions" value="42"/>
</dbReference>
<dbReference type="STRING" id="7227.FBpp0288470"/>
<dbReference type="GlyGen" id="Q9V7N5">
    <property type="glycosylation" value="1 site"/>
</dbReference>
<dbReference type="PaxDb" id="7227-FBpp0288471"/>
<dbReference type="DNASU" id="36826"/>
<dbReference type="EnsemblMetazoa" id="FBtr0087173">
    <molecule id="Q9V7N5-2"/>
    <property type="protein sequence ID" value="FBpp0086317"/>
    <property type="gene ID" value="FBgn0287825"/>
</dbReference>
<dbReference type="EnsemblMetazoa" id="FBtr0087175">
    <molecule id="Q9V7N5-3"/>
    <property type="protein sequence ID" value="FBpp0086319"/>
    <property type="gene ID" value="FBgn0287825"/>
</dbReference>
<dbReference type="EnsemblMetazoa" id="FBtr0087176">
    <molecule id="Q9V7N5-2"/>
    <property type="protein sequence ID" value="FBpp0086320"/>
    <property type="gene ID" value="FBgn0287825"/>
</dbReference>
<dbReference type="EnsemblMetazoa" id="FBtr0290031">
    <molecule id="Q9V7N5-1"/>
    <property type="protein sequence ID" value="FBpp0288470"/>
    <property type="gene ID" value="FBgn0287825"/>
</dbReference>
<dbReference type="EnsemblMetazoa" id="FBtr0290032">
    <molecule id="Q9V7N5-1"/>
    <property type="protein sequence ID" value="FBpp0288471"/>
    <property type="gene ID" value="FBgn0287825"/>
</dbReference>
<dbReference type="GeneID" id="36826"/>
<dbReference type="KEGG" id="dme:Dmel_CG8048"/>
<dbReference type="AGR" id="FB:FBgn0287825"/>
<dbReference type="CTD" id="36826"/>
<dbReference type="FlyBase" id="FBgn0287825">
    <property type="gene designation" value="Vha44"/>
</dbReference>
<dbReference type="VEuPathDB" id="VectorBase:FBgn0287825"/>
<dbReference type="eggNOG" id="KOG2909">
    <property type="taxonomic scope" value="Eukaryota"/>
</dbReference>
<dbReference type="GeneTree" id="ENSGT00390000004263"/>
<dbReference type="HOGENOM" id="CLU_017554_3_1_1"/>
<dbReference type="InParanoid" id="Q9V7N5"/>
<dbReference type="OMA" id="KVMANEW"/>
<dbReference type="OrthoDB" id="6605928at2759"/>
<dbReference type="PhylomeDB" id="Q9V7N5"/>
<dbReference type="Reactome" id="R-DME-1222556">
    <property type="pathway name" value="ROS and RNS production in phagocytes"/>
</dbReference>
<dbReference type="Reactome" id="R-DME-77387">
    <property type="pathway name" value="Insulin receptor recycling"/>
</dbReference>
<dbReference type="Reactome" id="R-DME-917977">
    <property type="pathway name" value="Transferrin endocytosis and recycling"/>
</dbReference>
<dbReference type="Reactome" id="R-DME-9639288">
    <property type="pathway name" value="Amino acids regulate mTORC1"/>
</dbReference>
<dbReference type="Reactome" id="R-DME-983712">
    <property type="pathway name" value="Ion channel transport"/>
</dbReference>
<dbReference type="SignaLink" id="Q9V7N5"/>
<dbReference type="BioGRID-ORCS" id="36826">
    <property type="hits" value="0 hits in 3 CRISPR screens"/>
</dbReference>
<dbReference type="ChiTaRS" id="Vha44">
    <property type="organism name" value="fly"/>
</dbReference>
<dbReference type="GenomeRNAi" id="36826"/>
<dbReference type="PRO" id="PR:Q9V7N5"/>
<dbReference type="Proteomes" id="UP000000803">
    <property type="component" value="Chromosome 2R"/>
</dbReference>
<dbReference type="Bgee" id="FBgn0262511">
    <property type="expression patterns" value="Expressed in leg muscle motor neuron in post-embryonic organism and 287 other cell types or tissues"/>
</dbReference>
<dbReference type="ExpressionAtlas" id="Q9V7N5">
    <property type="expression patterns" value="baseline and differential"/>
</dbReference>
<dbReference type="GO" id="GO:0033181">
    <property type="term" value="C:plasma membrane proton-transporting V-type ATPase complex"/>
    <property type="evidence" value="ECO:0000315"/>
    <property type="project" value="FlyBase"/>
</dbReference>
<dbReference type="GO" id="GO:0000221">
    <property type="term" value="C:vacuolar proton-transporting V-type ATPase, V1 domain"/>
    <property type="evidence" value="ECO:0000250"/>
    <property type="project" value="FlyBase"/>
</dbReference>
<dbReference type="GO" id="GO:0046961">
    <property type="term" value="F:proton-transporting ATPase activity, rotational mechanism"/>
    <property type="evidence" value="ECO:0000318"/>
    <property type="project" value="GO_Central"/>
</dbReference>
<dbReference type="GO" id="GO:1902600">
    <property type="term" value="P:proton transmembrane transport"/>
    <property type="evidence" value="ECO:0000250"/>
    <property type="project" value="FlyBase"/>
</dbReference>
<dbReference type="CDD" id="cd14785">
    <property type="entry name" value="V-ATPase_C"/>
    <property type="match status" value="1"/>
</dbReference>
<dbReference type="FunFam" id="3.30.70.100:FF:000002">
    <property type="entry name" value="V-type proton ATPase subunit C"/>
    <property type="match status" value="1"/>
</dbReference>
<dbReference type="Gene3D" id="3.30.70.100">
    <property type="match status" value="1"/>
</dbReference>
<dbReference type="Gene3D" id="1.20.1460.10">
    <property type="entry name" value="subunit c (vma5p) of the yeast v-atpase, domain 2"/>
    <property type="match status" value="1"/>
</dbReference>
<dbReference type="Gene3D" id="3.30.70.1180">
    <property type="entry name" value="Vacuolar atp synthase subunit c, domain 1"/>
    <property type="match status" value="1"/>
</dbReference>
<dbReference type="InterPro" id="IPR004907">
    <property type="entry name" value="ATPase_V1-cplx_csu"/>
</dbReference>
<dbReference type="InterPro" id="IPR036132">
    <property type="entry name" value="Vac_ATP_synth_c_sf"/>
</dbReference>
<dbReference type="PANTHER" id="PTHR10137">
    <property type="entry name" value="V-TYPE PROTON ATPASE SUBUNIT C"/>
    <property type="match status" value="1"/>
</dbReference>
<dbReference type="PANTHER" id="PTHR10137:SF0">
    <property type="entry name" value="V-TYPE PROTON ATPASE SUBUNIT C"/>
    <property type="match status" value="1"/>
</dbReference>
<dbReference type="Pfam" id="PF03223">
    <property type="entry name" value="V-ATPase_C"/>
    <property type="match status" value="2"/>
</dbReference>
<dbReference type="SUPFAM" id="SSF118203">
    <property type="entry name" value="Vacuolar ATP synthase subunit C"/>
    <property type="match status" value="2"/>
</dbReference>